<accession>Q02GB2</accession>
<comment type="function">
    <text evidence="1">Catalyzes the transfer of a phosphate group to glutamate to form L-glutamate 5-phosphate.</text>
</comment>
<comment type="catalytic activity">
    <reaction evidence="1">
        <text>L-glutamate + ATP = L-glutamyl 5-phosphate + ADP</text>
        <dbReference type="Rhea" id="RHEA:14877"/>
        <dbReference type="ChEBI" id="CHEBI:29985"/>
        <dbReference type="ChEBI" id="CHEBI:30616"/>
        <dbReference type="ChEBI" id="CHEBI:58274"/>
        <dbReference type="ChEBI" id="CHEBI:456216"/>
        <dbReference type="EC" id="2.7.2.11"/>
    </reaction>
</comment>
<comment type="pathway">
    <text evidence="1">Amino-acid biosynthesis; L-proline biosynthesis; L-glutamate 5-semialdehyde from L-glutamate: step 1/2.</text>
</comment>
<comment type="subcellular location">
    <subcellularLocation>
        <location evidence="1">Cytoplasm</location>
    </subcellularLocation>
</comment>
<comment type="similarity">
    <text evidence="1">Belongs to the glutamate 5-kinase family.</text>
</comment>
<evidence type="ECO:0000255" key="1">
    <source>
        <dbReference type="HAMAP-Rule" id="MF_00456"/>
    </source>
</evidence>
<protein>
    <recommendedName>
        <fullName evidence="1">Glutamate 5-kinase</fullName>
        <ecNumber evidence="1">2.7.2.11</ecNumber>
    </recommendedName>
    <alternativeName>
        <fullName evidence="1">Gamma-glutamyl kinase</fullName>
        <shortName evidence="1">GK</shortName>
    </alternativeName>
</protein>
<sequence>MRDKVTGARRWVVKIGSALLTADGRGLDRNAMAVWVEQMVALHCAGIELVLVSSGAVAAGMSRLGWVSRPSAMHELQAAASVGQMGLVQAWESSFALHGLQTAQVLLTHDDLSDRKRYLNARSTLRTLVELGVVPVINENDTVVTDEIRFGDNDTLAALVANLVEADLLVILTDRDGMFDADPRNNPDAQLIYEARADDPQLDAVAGGSAGALGRGGMQTKLRAARLAARSGGHTVIVGGRIERVLDRLRAGERLGTLLTPDRSRKAARKQWLAGHLQMRGTLVLDDGAVKAVSQDHKSLLPVGVKAVQGSFRRGEMVVCVDQGGREVARGLVNYSALEAQKILGQPTDAIEALLGYVDGPELVHRDNLVLV</sequence>
<proteinExistence type="inferred from homology"/>
<dbReference type="EC" id="2.7.2.11" evidence="1"/>
<dbReference type="EMBL" id="CP000438">
    <property type="protein sequence ID" value="ABJ13944.1"/>
    <property type="molecule type" value="Genomic_DNA"/>
</dbReference>
<dbReference type="RefSeq" id="WP_003094756.1">
    <property type="nucleotide sequence ID" value="NZ_CP034244.1"/>
</dbReference>
<dbReference type="SMR" id="Q02GB2"/>
<dbReference type="KEGG" id="pau:PA14_60420"/>
<dbReference type="PseudoCAP" id="PA14_60420"/>
<dbReference type="HOGENOM" id="CLU_025400_2_0_6"/>
<dbReference type="BioCyc" id="PAER208963:G1G74-5109-MONOMER"/>
<dbReference type="UniPathway" id="UPA00098">
    <property type="reaction ID" value="UER00359"/>
</dbReference>
<dbReference type="Proteomes" id="UP000000653">
    <property type="component" value="Chromosome"/>
</dbReference>
<dbReference type="GO" id="GO:0005829">
    <property type="term" value="C:cytosol"/>
    <property type="evidence" value="ECO:0007669"/>
    <property type="project" value="TreeGrafter"/>
</dbReference>
<dbReference type="GO" id="GO:0005524">
    <property type="term" value="F:ATP binding"/>
    <property type="evidence" value="ECO:0007669"/>
    <property type="project" value="UniProtKB-KW"/>
</dbReference>
<dbReference type="GO" id="GO:0004349">
    <property type="term" value="F:glutamate 5-kinase activity"/>
    <property type="evidence" value="ECO:0007669"/>
    <property type="project" value="UniProtKB-UniRule"/>
</dbReference>
<dbReference type="GO" id="GO:0003723">
    <property type="term" value="F:RNA binding"/>
    <property type="evidence" value="ECO:0007669"/>
    <property type="project" value="InterPro"/>
</dbReference>
<dbReference type="GO" id="GO:0055129">
    <property type="term" value="P:L-proline biosynthetic process"/>
    <property type="evidence" value="ECO:0007669"/>
    <property type="project" value="UniProtKB-UniRule"/>
</dbReference>
<dbReference type="CDD" id="cd04242">
    <property type="entry name" value="AAK_G5K_ProB"/>
    <property type="match status" value="1"/>
</dbReference>
<dbReference type="CDD" id="cd21157">
    <property type="entry name" value="PUA_G5K"/>
    <property type="match status" value="1"/>
</dbReference>
<dbReference type="FunFam" id="2.30.130.10:FF:000003">
    <property type="entry name" value="Glutamate 5-kinase"/>
    <property type="match status" value="1"/>
</dbReference>
<dbReference type="FunFam" id="3.40.1160.10:FF:000003">
    <property type="entry name" value="Glutamate 5-kinase"/>
    <property type="match status" value="1"/>
</dbReference>
<dbReference type="FunFam" id="3.40.1160.10:FF:000038">
    <property type="entry name" value="Glutamate 5-kinase"/>
    <property type="match status" value="1"/>
</dbReference>
<dbReference type="Gene3D" id="3.40.1160.10">
    <property type="entry name" value="Acetylglutamate kinase-like"/>
    <property type="match status" value="2"/>
</dbReference>
<dbReference type="Gene3D" id="2.30.130.10">
    <property type="entry name" value="PUA domain"/>
    <property type="match status" value="1"/>
</dbReference>
<dbReference type="HAMAP" id="MF_00456">
    <property type="entry name" value="ProB"/>
    <property type="match status" value="1"/>
</dbReference>
<dbReference type="InterPro" id="IPR036393">
    <property type="entry name" value="AceGlu_kinase-like_sf"/>
</dbReference>
<dbReference type="InterPro" id="IPR001048">
    <property type="entry name" value="Asp/Glu/Uridylate_kinase"/>
</dbReference>
<dbReference type="InterPro" id="IPR041739">
    <property type="entry name" value="G5K_ProB"/>
</dbReference>
<dbReference type="InterPro" id="IPR001057">
    <property type="entry name" value="Glu/AcGlu_kinase"/>
</dbReference>
<dbReference type="InterPro" id="IPR011529">
    <property type="entry name" value="Glu_5kinase"/>
</dbReference>
<dbReference type="InterPro" id="IPR005715">
    <property type="entry name" value="Glu_5kinase/COase_Synthase"/>
</dbReference>
<dbReference type="InterPro" id="IPR019797">
    <property type="entry name" value="Glutamate_5-kinase_CS"/>
</dbReference>
<dbReference type="InterPro" id="IPR002478">
    <property type="entry name" value="PUA"/>
</dbReference>
<dbReference type="InterPro" id="IPR015947">
    <property type="entry name" value="PUA-like_sf"/>
</dbReference>
<dbReference type="InterPro" id="IPR036974">
    <property type="entry name" value="PUA_sf"/>
</dbReference>
<dbReference type="NCBIfam" id="TIGR01027">
    <property type="entry name" value="proB"/>
    <property type="match status" value="1"/>
</dbReference>
<dbReference type="PANTHER" id="PTHR43654">
    <property type="entry name" value="GLUTAMATE 5-KINASE"/>
    <property type="match status" value="1"/>
</dbReference>
<dbReference type="PANTHER" id="PTHR43654:SF1">
    <property type="entry name" value="ISOPENTENYL PHOSPHATE KINASE"/>
    <property type="match status" value="1"/>
</dbReference>
<dbReference type="Pfam" id="PF00696">
    <property type="entry name" value="AA_kinase"/>
    <property type="match status" value="1"/>
</dbReference>
<dbReference type="Pfam" id="PF01472">
    <property type="entry name" value="PUA"/>
    <property type="match status" value="1"/>
</dbReference>
<dbReference type="PIRSF" id="PIRSF000729">
    <property type="entry name" value="GK"/>
    <property type="match status" value="1"/>
</dbReference>
<dbReference type="PRINTS" id="PR00474">
    <property type="entry name" value="GLU5KINASE"/>
</dbReference>
<dbReference type="SMART" id="SM00359">
    <property type="entry name" value="PUA"/>
    <property type="match status" value="1"/>
</dbReference>
<dbReference type="SUPFAM" id="SSF53633">
    <property type="entry name" value="Carbamate kinase-like"/>
    <property type="match status" value="1"/>
</dbReference>
<dbReference type="SUPFAM" id="SSF88697">
    <property type="entry name" value="PUA domain-like"/>
    <property type="match status" value="1"/>
</dbReference>
<dbReference type="PROSITE" id="PS00902">
    <property type="entry name" value="GLUTAMATE_5_KINASE"/>
    <property type="match status" value="1"/>
</dbReference>
<dbReference type="PROSITE" id="PS50890">
    <property type="entry name" value="PUA"/>
    <property type="match status" value="1"/>
</dbReference>
<reference key="1">
    <citation type="journal article" date="2006" name="Genome Biol.">
        <title>Genomic analysis reveals that Pseudomonas aeruginosa virulence is combinatorial.</title>
        <authorList>
            <person name="Lee D.G."/>
            <person name="Urbach J.M."/>
            <person name="Wu G."/>
            <person name="Liberati N.T."/>
            <person name="Feinbaum R.L."/>
            <person name="Miyata S."/>
            <person name="Diggins L.T."/>
            <person name="He J."/>
            <person name="Saucier M."/>
            <person name="Deziel E."/>
            <person name="Friedman L."/>
            <person name="Li L."/>
            <person name="Grills G."/>
            <person name="Montgomery K."/>
            <person name="Kucherlapati R."/>
            <person name="Rahme L.G."/>
            <person name="Ausubel F.M."/>
        </authorList>
    </citation>
    <scope>NUCLEOTIDE SEQUENCE [LARGE SCALE GENOMIC DNA]</scope>
    <source>
        <strain>UCBPP-PA14</strain>
    </source>
</reference>
<name>PROB_PSEAB</name>
<feature type="chain" id="PRO_1000081092" description="Glutamate 5-kinase">
    <location>
        <begin position="1"/>
        <end position="372"/>
    </location>
</feature>
<feature type="domain" description="PUA" evidence="1">
    <location>
        <begin position="280"/>
        <end position="358"/>
    </location>
</feature>
<feature type="binding site" evidence="1">
    <location>
        <position position="14"/>
    </location>
    <ligand>
        <name>ATP</name>
        <dbReference type="ChEBI" id="CHEBI:30616"/>
    </ligand>
</feature>
<feature type="binding site" evidence="1">
    <location>
        <position position="54"/>
    </location>
    <ligand>
        <name>substrate</name>
    </ligand>
</feature>
<feature type="binding site" evidence="1">
    <location>
        <position position="141"/>
    </location>
    <ligand>
        <name>substrate</name>
    </ligand>
</feature>
<feature type="binding site" evidence="1">
    <location>
        <position position="153"/>
    </location>
    <ligand>
        <name>substrate</name>
    </ligand>
</feature>
<feature type="binding site" evidence="1">
    <location>
        <begin position="173"/>
        <end position="174"/>
    </location>
    <ligand>
        <name>ATP</name>
        <dbReference type="ChEBI" id="CHEBI:30616"/>
    </ligand>
</feature>
<keyword id="KW-0028">Amino-acid biosynthesis</keyword>
<keyword id="KW-0067">ATP-binding</keyword>
<keyword id="KW-0963">Cytoplasm</keyword>
<keyword id="KW-0418">Kinase</keyword>
<keyword id="KW-0547">Nucleotide-binding</keyword>
<keyword id="KW-0641">Proline biosynthesis</keyword>
<keyword id="KW-0808">Transferase</keyword>
<gene>
    <name evidence="1" type="primary">proB</name>
    <name type="ordered locus">PA14_60420</name>
</gene>
<organism>
    <name type="scientific">Pseudomonas aeruginosa (strain UCBPP-PA14)</name>
    <dbReference type="NCBI Taxonomy" id="208963"/>
    <lineage>
        <taxon>Bacteria</taxon>
        <taxon>Pseudomonadati</taxon>
        <taxon>Pseudomonadota</taxon>
        <taxon>Gammaproteobacteria</taxon>
        <taxon>Pseudomonadales</taxon>
        <taxon>Pseudomonadaceae</taxon>
        <taxon>Pseudomonas</taxon>
    </lineage>
</organism>